<proteinExistence type="inferred from homology"/>
<protein>
    <recommendedName>
        <fullName>DNA-binding protein HU-like</fullName>
    </recommendedName>
</protein>
<reference key="1">
    <citation type="journal article" date="1998" name="Nature">
        <title>The genome sequence of Rickettsia prowazekii and the origin of mitochondria.</title>
        <authorList>
            <person name="Andersson S.G.E."/>
            <person name="Zomorodipour A."/>
            <person name="Andersson J.O."/>
            <person name="Sicheritz-Ponten T."/>
            <person name="Alsmark U.C.M."/>
            <person name="Podowski R.M."/>
            <person name="Naeslund A.K."/>
            <person name="Eriksson A.-S."/>
            <person name="Winkler H.H."/>
            <person name="Kurland C.G."/>
        </authorList>
    </citation>
    <scope>NUCLEOTIDE SEQUENCE [LARGE SCALE GENOMIC DNA]</scope>
    <source>
        <strain>Madrid E</strain>
    </source>
</reference>
<dbReference type="EMBL" id="AJ235272">
    <property type="protein sequence ID" value="CAA14973.1"/>
    <property type="molecule type" value="Genomic_DNA"/>
</dbReference>
<dbReference type="PIR" id="C71656">
    <property type="entry name" value="C71656"/>
</dbReference>
<dbReference type="RefSeq" id="NP_220897.1">
    <property type="nucleotide sequence ID" value="NC_000963.1"/>
</dbReference>
<dbReference type="RefSeq" id="WP_004597791.1">
    <property type="nucleotide sequence ID" value="NC_000963.1"/>
</dbReference>
<dbReference type="SMR" id="Q9ZD26"/>
<dbReference type="STRING" id="272947.gene:17555604"/>
<dbReference type="EnsemblBacteria" id="CAA14973">
    <property type="protein sequence ID" value="CAA14973"/>
    <property type="gene ID" value="CAA14973"/>
</dbReference>
<dbReference type="KEGG" id="rpr:RP524"/>
<dbReference type="PATRIC" id="fig|272947.5.peg.532"/>
<dbReference type="eggNOG" id="COG0776">
    <property type="taxonomic scope" value="Bacteria"/>
</dbReference>
<dbReference type="HOGENOM" id="CLU_2467017_0_0_5"/>
<dbReference type="OrthoDB" id="9804203at2"/>
<dbReference type="Proteomes" id="UP000002480">
    <property type="component" value="Chromosome"/>
</dbReference>
<dbReference type="GO" id="GO:0005829">
    <property type="term" value="C:cytosol"/>
    <property type="evidence" value="ECO:0007669"/>
    <property type="project" value="TreeGrafter"/>
</dbReference>
<dbReference type="GO" id="GO:0003677">
    <property type="term" value="F:DNA binding"/>
    <property type="evidence" value="ECO:0007669"/>
    <property type="project" value="UniProtKB-KW"/>
</dbReference>
<dbReference type="GO" id="GO:0030527">
    <property type="term" value="F:structural constituent of chromatin"/>
    <property type="evidence" value="ECO:0007669"/>
    <property type="project" value="InterPro"/>
</dbReference>
<dbReference type="GO" id="GO:0030261">
    <property type="term" value="P:chromosome condensation"/>
    <property type="evidence" value="ECO:0007669"/>
    <property type="project" value="UniProtKB-KW"/>
</dbReference>
<dbReference type="Gene3D" id="4.10.520.10">
    <property type="entry name" value="IHF-like DNA-binding proteins"/>
    <property type="match status" value="1"/>
</dbReference>
<dbReference type="InterPro" id="IPR000119">
    <property type="entry name" value="Hist_DNA-bd"/>
</dbReference>
<dbReference type="InterPro" id="IPR010992">
    <property type="entry name" value="IHF-like_DNA-bd_dom_sf"/>
</dbReference>
<dbReference type="PANTHER" id="PTHR33175">
    <property type="entry name" value="DNA-BINDING PROTEIN HU"/>
    <property type="match status" value="1"/>
</dbReference>
<dbReference type="PANTHER" id="PTHR33175:SF3">
    <property type="entry name" value="DNA-BINDING PROTEIN HU-BETA"/>
    <property type="match status" value="1"/>
</dbReference>
<dbReference type="Pfam" id="PF00216">
    <property type="entry name" value="Bac_DNA_binding"/>
    <property type="match status" value="1"/>
</dbReference>
<dbReference type="SMART" id="SM00411">
    <property type="entry name" value="BHL"/>
    <property type="match status" value="1"/>
</dbReference>
<dbReference type="SUPFAM" id="SSF47729">
    <property type="entry name" value="IHF-like DNA-binding proteins"/>
    <property type="match status" value="1"/>
</dbReference>
<sequence>MVTKNYLIDKVHDKLDYLSKQDVKESVDLILDYLNESLKEQKRIEIRNFGNFSIRKRKFPESNKFYNTVYYRMPKNLFKD</sequence>
<accession>Q9ZD26</accession>
<feature type="chain" id="PRO_0000104966" description="DNA-binding protein HU-like">
    <location>
        <begin position="1"/>
        <end position="80"/>
    </location>
</feature>
<organism>
    <name type="scientific">Rickettsia prowazekii (strain Madrid E)</name>
    <dbReference type="NCBI Taxonomy" id="272947"/>
    <lineage>
        <taxon>Bacteria</taxon>
        <taxon>Pseudomonadati</taxon>
        <taxon>Pseudomonadota</taxon>
        <taxon>Alphaproteobacteria</taxon>
        <taxon>Rickettsiales</taxon>
        <taxon>Rickettsiaceae</taxon>
        <taxon>Rickettsieae</taxon>
        <taxon>Rickettsia</taxon>
        <taxon>typhus group</taxon>
    </lineage>
</organism>
<evidence type="ECO:0000250" key="1"/>
<evidence type="ECO:0000305" key="2"/>
<gene>
    <name type="ordered locus">RP524</name>
</gene>
<name>DBHL_RICPR</name>
<comment type="function">
    <text evidence="1">Histone-like DNA-binding protein which is capable of wrapping DNA to stabilize it, and thus to prevent its denaturation under extreme environmental conditions.</text>
</comment>
<comment type="similarity">
    <text evidence="2">Belongs to the bacterial histone-like protein family.</text>
</comment>
<keyword id="KW-0226">DNA condensation</keyword>
<keyword id="KW-0238">DNA-binding</keyword>
<keyword id="KW-1185">Reference proteome</keyword>